<proteinExistence type="evidence at transcript level"/>
<keyword id="KW-0044">Antibiotic</keyword>
<keyword id="KW-0929">Antimicrobial</keyword>
<keyword id="KW-0051">Antiviral defense</keyword>
<keyword id="KW-1003">Cell membrane</keyword>
<keyword id="KW-0963">Cytoplasm</keyword>
<keyword id="KW-0968">Cytoplasmic vesicle</keyword>
<keyword id="KW-0333">Golgi apparatus</keyword>
<keyword id="KW-0342">GTP-binding</keyword>
<keyword id="KW-0378">Hydrolase</keyword>
<keyword id="KW-0391">Immunity</keyword>
<keyword id="KW-0399">Innate immunity</keyword>
<keyword id="KW-0449">Lipoprotein</keyword>
<keyword id="KW-0472">Membrane</keyword>
<keyword id="KW-0488">Methylation</keyword>
<keyword id="KW-0547">Nucleotide-binding</keyword>
<keyword id="KW-0597">Phosphoprotein</keyword>
<keyword id="KW-0636">Prenylation</keyword>
<keyword id="KW-0964">Secreted</keyword>
<gene>
    <name type="primary">GBP1</name>
</gene>
<feature type="chain" id="PRO_0000250481" description="Guanylate-binding protein 1">
    <location>
        <begin position="1"/>
        <end position="587"/>
    </location>
</feature>
<feature type="propeptide" id="PRO_0000396776" description="Removed in mature form" evidence="1">
    <location>
        <begin position="588"/>
        <end position="590"/>
    </location>
</feature>
<feature type="domain" description="GB1/RHD3-type G" evidence="3">
    <location>
        <begin position="35"/>
        <end position="276"/>
    </location>
</feature>
<feature type="region of interest" description="GTPase domain (Globular)" evidence="1">
    <location>
        <begin position="1"/>
        <end position="309"/>
    </location>
</feature>
<feature type="binding site" evidence="1">
    <location>
        <begin position="45"/>
        <end position="52"/>
    </location>
    <ligand>
        <name>GTP</name>
        <dbReference type="ChEBI" id="CHEBI:37565"/>
    </ligand>
</feature>
<feature type="binding site" evidence="1">
    <location>
        <begin position="67"/>
        <end position="69"/>
    </location>
    <ligand>
        <name>GTP</name>
        <dbReference type="ChEBI" id="CHEBI:37565"/>
    </ligand>
</feature>
<feature type="binding site" evidence="1">
    <location>
        <begin position="97"/>
        <end position="101"/>
    </location>
    <ligand>
        <name>GTP</name>
        <dbReference type="ChEBI" id="CHEBI:37565"/>
    </ligand>
</feature>
<feature type="modified residue" description="Phosphoserine" evidence="1">
    <location>
        <position position="156"/>
    </location>
</feature>
<feature type="modified residue" description="Cysteine methyl ester" evidence="1">
    <location>
        <position position="587"/>
    </location>
</feature>
<feature type="modified residue" description="Phosphothreonine" evidence="1">
    <location>
        <position position="588"/>
    </location>
</feature>
<feature type="lipid moiety-binding region" description="S-farnesyl cysteine" evidence="1">
    <location>
        <position position="587"/>
    </location>
</feature>
<reference key="1">
    <citation type="submission" date="2005-02" db="EMBL/GenBank/DDBJ databases">
        <title>Cloning of African green monkey guanylate binding protein 1 cDNA.</title>
        <authorList>
            <person name="Terajima M."/>
        </authorList>
    </citation>
    <scope>NUCLEOTIDE SEQUENCE [MRNA]</scope>
</reference>
<organism>
    <name type="scientific">Chlorocebus aethiops</name>
    <name type="common">Green monkey</name>
    <name type="synonym">Cercopithecus aethiops</name>
    <dbReference type="NCBI Taxonomy" id="9534"/>
    <lineage>
        <taxon>Eukaryota</taxon>
        <taxon>Metazoa</taxon>
        <taxon>Chordata</taxon>
        <taxon>Craniata</taxon>
        <taxon>Vertebrata</taxon>
        <taxon>Euteleostomi</taxon>
        <taxon>Mammalia</taxon>
        <taxon>Eutheria</taxon>
        <taxon>Euarchontoglires</taxon>
        <taxon>Primates</taxon>
        <taxon>Haplorrhini</taxon>
        <taxon>Catarrhini</taxon>
        <taxon>Cercopithecidae</taxon>
        <taxon>Cercopithecinae</taxon>
        <taxon>Chlorocebus</taxon>
    </lineage>
</organism>
<accession>Q5D1D6</accession>
<dbReference type="EC" id="3.6.1.-" evidence="1"/>
<dbReference type="EC" id="3.6.5.-" evidence="1"/>
<dbReference type="EMBL" id="AY920435">
    <property type="protein sequence ID" value="AAX13804.1"/>
    <property type="molecule type" value="mRNA"/>
</dbReference>
<dbReference type="SMR" id="Q5D1D6"/>
<dbReference type="GO" id="GO:0030659">
    <property type="term" value="C:cytoplasmic vesicle membrane"/>
    <property type="evidence" value="ECO:0007669"/>
    <property type="project" value="UniProtKB-SubCell"/>
</dbReference>
<dbReference type="GO" id="GO:0005829">
    <property type="term" value="C:cytosol"/>
    <property type="evidence" value="ECO:0007669"/>
    <property type="project" value="UniProtKB-SubCell"/>
</dbReference>
<dbReference type="GO" id="GO:0005576">
    <property type="term" value="C:extracellular region"/>
    <property type="evidence" value="ECO:0007669"/>
    <property type="project" value="UniProtKB-SubCell"/>
</dbReference>
<dbReference type="GO" id="GO:0000139">
    <property type="term" value="C:Golgi membrane"/>
    <property type="evidence" value="ECO:0007669"/>
    <property type="project" value="UniProtKB-SubCell"/>
</dbReference>
<dbReference type="GO" id="GO:0005886">
    <property type="term" value="C:plasma membrane"/>
    <property type="evidence" value="ECO:0007669"/>
    <property type="project" value="UniProtKB-SubCell"/>
</dbReference>
<dbReference type="GO" id="GO:0106139">
    <property type="term" value="C:symbiont cell surface"/>
    <property type="evidence" value="ECO:0000250"/>
    <property type="project" value="UniProtKB"/>
</dbReference>
<dbReference type="GO" id="GO:0004382">
    <property type="term" value="F:GDP phosphatase activity"/>
    <property type="evidence" value="ECO:0007669"/>
    <property type="project" value="RHEA"/>
</dbReference>
<dbReference type="GO" id="GO:0005525">
    <property type="term" value="F:GTP binding"/>
    <property type="evidence" value="ECO:0000250"/>
    <property type="project" value="UniProtKB"/>
</dbReference>
<dbReference type="GO" id="GO:0003924">
    <property type="term" value="F:GTPase activity"/>
    <property type="evidence" value="ECO:0000250"/>
    <property type="project" value="UniProtKB"/>
</dbReference>
<dbReference type="GO" id="GO:0001530">
    <property type="term" value="F:lipopolysaccharide binding"/>
    <property type="evidence" value="ECO:0000250"/>
    <property type="project" value="UniProtKB"/>
</dbReference>
<dbReference type="GO" id="GO:0051715">
    <property type="term" value="P:cytolysis in another organism"/>
    <property type="evidence" value="ECO:0000250"/>
    <property type="project" value="UniProtKB"/>
</dbReference>
<dbReference type="GO" id="GO:0042742">
    <property type="term" value="P:defense response to bacterium"/>
    <property type="evidence" value="ECO:0000250"/>
    <property type="project" value="UniProtKB"/>
</dbReference>
<dbReference type="GO" id="GO:0042832">
    <property type="term" value="P:defense response to protozoan"/>
    <property type="evidence" value="ECO:0000250"/>
    <property type="project" value="UniProtKB"/>
</dbReference>
<dbReference type="GO" id="GO:0051607">
    <property type="term" value="P:defense response to virus"/>
    <property type="evidence" value="ECO:0007669"/>
    <property type="project" value="UniProtKB-KW"/>
</dbReference>
<dbReference type="GO" id="GO:0045087">
    <property type="term" value="P:innate immune response"/>
    <property type="evidence" value="ECO:0007669"/>
    <property type="project" value="UniProtKB-KW"/>
</dbReference>
<dbReference type="GO" id="GO:0160075">
    <property type="term" value="P:non-canonical inflammasome complex assembly"/>
    <property type="evidence" value="ECO:0000250"/>
    <property type="project" value="UniProtKB"/>
</dbReference>
<dbReference type="GO" id="GO:0140639">
    <property type="term" value="P:positive regulation of pyroptotic inflammatory response"/>
    <property type="evidence" value="ECO:0000250"/>
    <property type="project" value="UniProtKB"/>
</dbReference>
<dbReference type="CDD" id="cd01851">
    <property type="entry name" value="GBP"/>
    <property type="match status" value="1"/>
</dbReference>
<dbReference type="CDD" id="cd16269">
    <property type="entry name" value="GBP_C"/>
    <property type="match status" value="1"/>
</dbReference>
<dbReference type="FunFam" id="1.20.1000.10:FF:000001">
    <property type="entry name" value="Guanylate binding protein 1"/>
    <property type="match status" value="1"/>
</dbReference>
<dbReference type="FunFam" id="3.40.50.300:FF:000422">
    <property type="entry name" value="Guanylate-binding protein 1"/>
    <property type="match status" value="1"/>
</dbReference>
<dbReference type="Gene3D" id="1.20.1000.10">
    <property type="entry name" value="Guanylate-binding protein, C-terminal domain"/>
    <property type="match status" value="1"/>
</dbReference>
<dbReference type="Gene3D" id="3.40.50.300">
    <property type="entry name" value="P-loop containing nucleotide triphosphate hydrolases"/>
    <property type="match status" value="1"/>
</dbReference>
<dbReference type="InterPro" id="IPR030386">
    <property type="entry name" value="G_GB1_RHD3_dom"/>
</dbReference>
<dbReference type="InterPro" id="IPR037684">
    <property type="entry name" value="GBP_C"/>
</dbReference>
<dbReference type="InterPro" id="IPR003191">
    <property type="entry name" value="Guanylate-bd/ATL_C"/>
</dbReference>
<dbReference type="InterPro" id="IPR036543">
    <property type="entry name" value="Guanylate-bd_C_sf"/>
</dbReference>
<dbReference type="InterPro" id="IPR015894">
    <property type="entry name" value="Guanylate-bd_N"/>
</dbReference>
<dbReference type="InterPro" id="IPR027417">
    <property type="entry name" value="P-loop_NTPase"/>
</dbReference>
<dbReference type="PANTHER" id="PTHR10751">
    <property type="entry name" value="GUANYLATE BINDING PROTEIN"/>
    <property type="match status" value="1"/>
</dbReference>
<dbReference type="Pfam" id="PF02263">
    <property type="entry name" value="GBP"/>
    <property type="match status" value="1"/>
</dbReference>
<dbReference type="Pfam" id="PF02841">
    <property type="entry name" value="GBP_C"/>
    <property type="match status" value="1"/>
</dbReference>
<dbReference type="SUPFAM" id="SSF48340">
    <property type="entry name" value="Interferon-induced guanylate-binding protein 1 (GBP1), C-terminal domain"/>
    <property type="match status" value="1"/>
</dbReference>
<dbReference type="SUPFAM" id="SSF52540">
    <property type="entry name" value="P-loop containing nucleoside triphosphate hydrolases"/>
    <property type="match status" value="1"/>
</dbReference>
<dbReference type="PROSITE" id="PS51715">
    <property type="entry name" value="G_GB1_RHD3"/>
    <property type="match status" value="1"/>
</dbReference>
<name>GBP1_CHLAE</name>
<comment type="function">
    <text evidence="1 2">Interferon (IFN)-inducible GTPase that plays important roles in innate immunity against a diverse range of bacterial, viral and protozoan pathogens. Hydrolyzes GTP to GMP in two consecutive cleavage reactions: GTP is first hydrolyzed to GDP and then to GMP in a processive manner. Following infection, recruited to the pathogen-containing vacuoles or vacuole-escaped bacteria and promotes both inflammasome assembly and autophagy. Acts as a positive regulator of inflammasome assembly by facilitating the detection of inflammasome ligands from pathogens (By similarity). Involved in the lysis of pathogen-containing vacuoles, releasing pathogens into the cytosol (By similarity). Following pathogen release in the cytosol, forms a protein coat in a GTPase-dependent manner that encapsulates pathogens and promotes the detection of ligands by pattern recognition receptors. Plays a key role in inflammasome assembly in response to infection by Gram-negative bacteria: following pathogen release in the cytosol, forms a protein coat that encapsulates Gram-negative bacteria and directly binds to lipopolysaccharide (LPS), disrupting the O-antigen barrier and unmasking lipid A that is that detected by the non-canonical inflammasome effector CASP4/CASP11. Also promotes recruitment of proteins that mediate bacterial cytolysis, leading to release double-stranded DNA (dsDNA) that activates the AIM2 inflammasome (By similarity). Involved in autophagy by regulating bacteriolytic peptide generation via its interaction with ubiquitin-binding protein SQSTM1, which delivers monoubiquitinated proteins to autolysosomes for the generation of bacteriolytic peptides (By similarity). Confers protection to several pathogens, including the bacterial pathogens L.monocytogenes and M.bovis BCG as well as the protozoan pathogen T.gondii. Exhibits antiviral activity against influenza virus (By similarity).</text>
</comment>
<comment type="catalytic activity">
    <reaction evidence="1">
        <text>GTP + H2O = GDP + phosphate + H(+)</text>
        <dbReference type="Rhea" id="RHEA:19669"/>
        <dbReference type="ChEBI" id="CHEBI:15377"/>
        <dbReference type="ChEBI" id="CHEBI:15378"/>
        <dbReference type="ChEBI" id="CHEBI:37565"/>
        <dbReference type="ChEBI" id="CHEBI:43474"/>
        <dbReference type="ChEBI" id="CHEBI:58189"/>
    </reaction>
    <physiologicalReaction direction="left-to-right" evidence="1">
        <dbReference type="Rhea" id="RHEA:19670"/>
    </physiologicalReaction>
</comment>
<comment type="catalytic activity">
    <reaction evidence="1">
        <text>GDP + H2O = GMP + phosphate + H(+)</text>
        <dbReference type="Rhea" id="RHEA:22156"/>
        <dbReference type="ChEBI" id="CHEBI:15377"/>
        <dbReference type="ChEBI" id="CHEBI:15378"/>
        <dbReference type="ChEBI" id="CHEBI:43474"/>
        <dbReference type="ChEBI" id="CHEBI:58115"/>
        <dbReference type="ChEBI" id="CHEBI:58189"/>
    </reaction>
    <physiologicalReaction direction="left-to-right" evidence="1">
        <dbReference type="Rhea" id="RHEA:22157"/>
    </physiologicalReaction>
</comment>
<comment type="subunit">
    <text evidence="1 2">Homodimer; homodimerization occurs upon GTP-binding and is required for the second hydrolysis step from GDP to GMP. Undergoes conformational changes and oligomerization upon GTP-binding and hydrolysis. Heterodimer with other family members, including GBP2, GBP3, GBP4 and GBP5. Dimerization regulates subcellular location to membranous structures (By similarity). Interacts with SQSTM1 (By similarity). Interacts (when phosphorylated) with 14-3-3 protein sigma (SFN); leading to GBP1 retention in the cytosol and inactivation (By similarity).</text>
</comment>
<comment type="subcellular location">
    <subcellularLocation>
        <location evidence="1">Cytoplasmic vesicle membrane</location>
        <topology evidence="1">Lipid-anchor</topology>
        <orientation evidence="1">Cytoplasmic side</orientation>
    </subcellularLocation>
    <subcellularLocation>
        <location evidence="1">Golgi apparatus membrane</location>
        <topology evidence="1">Lipid-anchor</topology>
        <orientation evidence="1">Cytoplasmic side</orientation>
    </subcellularLocation>
    <subcellularLocation>
        <location evidence="1">Cell membrane</location>
        <topology evidence="1">Lipid-anchor</topology>
        <orientation evidence="1">Cytoplasmic side</orientation>
    </subcellularLocation>
    <subcellularLocation>
        <location evidence="1">Cytoplasm</location>
        <location evidence="1">Cytosol</location>
    </subcellularLocation>
    <subcellularLocation>
        <location evidence="1">Secreted</location>
    </subcellularLocation>
    <text evidence="1">Localizes to pathogen-containing vacuoles or to the cell surface of bacteria that escaped vacuoles. Secreted from endothelial cells in the cerebrospinal fluid, upon bacterial challenge and independently of IFNG induction. Golgi membrane localization requires isoprenylation and the presence of another IFNG-induced factor. Sequestered in the cytosol following phosphorylation by PIM1 and subsequent interaction with 14-3-3 protein sigma (SFN).</text>
</comment>
<comment type="PTM">
    <text evidence="1">Isoprenylation is required for proper subcellular location.</text>
</comment>
<comment type="PTM">
    <text evidence="1">Phosphorylated at Ser-156 by PIM1 in absence of infection, inhibits GBP1: phosphorylation promotes interaction with 14-3-3 protein sigma (SFN), leading to GBP1 retention in the cytosol. Dephosphorylated in response to infection, liberating GBP1.</text>
</comment>
<comment type="similarity">
    <text evidence="3">Belongs to the TRAFAC class dynamin-like GTPase superfamily. GB1/RHD3 GTPase family. GB1 subfamily.</text>
</comment>
<protein>
    <recommendedName>
        <fullName>Guanylate-binding protein 1</fullName>
        <ecNumber evidence="1">3.6.1.-</ecNumber>
        <ecNumber evidence="1">3.6.5.-</ecNumber>
    </recommendedName>
    <alternativeName>
        <fullName>GTP-binding protein 1</fullName>
        <shortName>GBP-1</shortName>
    </alternativeName>
    <alternativeName>
        <fullName>Guanine nucleotide-binding protein 1</fullName>
    </alternativeName>
    <alternativeName>
        <fullName>Interferon-induced guanylate-binding protein 1</fullName>
    </alternativeName>
</protein>
<evidence type="ECO:0000250" key="1">
    <source>
        <dbReference type="UniProtKB" id="P32455"/>
    </source>
</evidence>
<evidence type="ECO:0000250" key="2">
    <source>
        <dbReference type="UniProtKB" id="Q01514"/>
    </source>
</evidence>
<evidence type="ECO:0000255" key="3">
    <source>
        <dbReference type="PROSITE-ProRule" id="PRU01052"/>
    </source>
</evidence>
<sequence>MASEIHMTGPMCLIENTNGRLMVNPEALKILSAITQPVVVVAIVGLYRTGKSYLMNKLAGKKKGFSLGSTVQSHTKGIWMWCVPHPKKPGHVLVLLDTEGLGDVEKGDNQNDSWIFALAILLSSTFVYNSMGTINQQAMDQLHYVTELTHRIRSKSSPDENENEDSADFVSFFPDFVWTLRDFSLDLEADGQPITADEYLTYSLKLKKGTSEKDKTFNLPRLCIRKFFPKKKCFVFDRPVHRKKLAQLEKLHDEELDPEFVQQVADFCSYIFSNSKTKTLSGGIKVNGPRLESLVLTYVNAISSGDLPCMENAVLALAQIENSAAVQKAVAHYEQQMGQKVQLPTETLQELLDLHRDSEREAIEVFIRSSFKDVDHLFQKELAAQLEKKRDDFCKQNQEASSDRCSALLQDIFSPLEEEVKMGIYSKPGGYRLFIQKLQDLKKKYYEEPRKGIQAEEILQTYLKSKESMTDAILQTDQTLTEKEKEIEVERVKAESAQASTKMLQEIQRKNEQMMEQKERSYQEHLKQLTEKMERDRAQLLKEQERTLALKLQEQERLLKEGFQTESRKMQNEIQDLQKKMRQRRTCTIS</sequence>